<reference key="1">
    <citation type="journal article" date="2004" name="Nature">
        <title>Genome evolution in yeasts.</title>
        <authorList>
            <person name="Dujon B."/>
            <person name="Sherman D."/>
            <person name="Fischer G."/>
            <person name="Durrens P."/>
            <person name="Casaregola S."/>
            <person name="Lafontaine I."/>
            <person name="de Montigny J."/>
            <person name="Marck C."/>
            <person name="Neuveglise C."/>
            <person name="Talla E."/>
            <person name="Goffard N."/>
            <person name="Frangeul L."/>
            <person name="Aigle M."/>
            <person name="Anthouard V."/>
            <person name="Babour A."/>
            <person name="Barbe V."/>
            <person name="Barnay S."/>
            <person name="Blanchin S."/>
            <person name="Beckerich J.-M."/>
            <person name="Beyne E."/>
            <person name="Bleykasten C."/>
            <person name="Boisrame A."/>
            <person name="Boyer J."/>
            <person name="Cattolico L."/>
            <person name="Confanioleri F."/>
            <person name="de Daruvar A."/>
            <person name="Despons L."/>
            <person name="Fabre E."/>
            <person name="Fairhead C."/>
            <person name="Ferry-Dumazet H."/>
            <person name="Groppi A."/>
            <person name="Hantraye F."/>
            <person name="Hennequin C."/>
            <person name="Jauniaux N."/>
            <person name="Joyet P."/>
            <person name="Kachouri R."/>
            <person name="Kerrest A."/>
            <person name="Koszul R."/>
            <person name="Lemaire M."/>
            <person name="Lesur I."/>
            <person name="Ma L."/>
            <person name="Muller H."/>
            <person name="Nicaud J.-M."/>
            <person name="Nikolski M."/>
            <person name="Oztas S."/>
            <person name="Ozier-Kalogeropoulos O."/>
            <person name="Pellenz S."/>
            <person name="Potier S."/>
            <person name="Richard G.-F."/>
            <person name="Straub M.-L."/>
            <person name="Suleau A."/>
            <person name="Swennen D."/>
            <person name="Tekaia F."/>
            <person name="Wesolowski-Louvel M."/>
            <person name="Westhof E."/>
            <person name="Wirth B."/>
            <person name="Zeniou-Meyer M."/>
            <person name="Zivanovic Y."/>
            <person name="Bolotin-Fukuhara M."/>
            <person name="Thierry A."/>
            <person name="Bouchier C."/>
            <person name="Caudron B."/>
            <person name="Scarpelli C."/>
            <person name="Gaillardin C."/>
            <person name="Weissenbach J."/>
            <person name="Wincker P."/>
            <person name="Souciet J.-L."/>
        </authorList>
    </citation>
    <scope>NUCLEOTIDE SEQUENCE [LARGE SCALE GENOMIC DNA]</scope>
    <source>
        <strain>ATCC 36239 / CBS 767 / BCRC 21394 / JCM 1990 / NBRC 0083 / IGC 2968</strain>
    </source>
</reference>
<protein>
    <recommendedName>
        <fullName>Mitochondrial inner membrane magnesium transporter MRS2</fullName>
    </recommendedName>
    <alternativeName>
        <fullName>RNA-splicing protein MRS2</fullName>
    </alternativeName>
</protein>
<feature type="transit peptide" description="Mitochondrion" evidence="2">
    <location>
        <begin position="1"/>
        <end position="20"/>
    </location>
</feature>
<feature type="chain" id="PRO_0000043244" description="Mitochondrial inner membrane magnesium transporter MRS2">
    <location>
        <begin position="21"/>
        <end position="476"/>
    </location>
</feature>
<feature type="transmembrane region" description="Helical" evidence="2">
    <location>
        <begin position="349"/>
        <end position="369"/>
    </location>
</feature>
<feature type="transmembrane region" description="Helical" evidence="2">
    <location>
        <begin position="385"/>
        <end position="405"/>
    </location>
</feature>
<feature type="short sequence motif" description="YGMN">
    <location>
        <begin position="373"/>
        <end position="376"/>
    </location>
</feature>
<keyword id="KW-0406">Ion transport</keyword>
<keyword id="KW-0460">Magnesium</keyword>
<keyword id="KW-0472">Membrane</keyword>
<keyword id="KW-0496">Mitochondrion</keyword>
<keyword id="KW-0999">Mitochondrion inner membrane</keyword>
<keyword id="KW-1185">Reference proteome</keyword>
<keyword id="KW-0809">Transit peptide</keyword>
<keyword id="KW-0812">Transmembrane</keyword>
<keyword id="KW-1133">Transmembrane helix</keyword>
<keyword id="KW-0813">Transport</keyword>
<organism>
    <name type="scientific">Debaryomyces hansenii (strain ATCC 36239 / CBS 767 / BCRC 21394 / JCM 1990 / NBRC 0083 / IGC 2968)</name>
    <name type="common">Yeast</name>
    <name type="synonym">Torulaspora hansenii</name>
    <dbReference type="NCBI Taxonomy" id="284592"/>
    <lineage>
        <taxon>Eukaryota</taxon>
        <taxon>Fungi</taxon>
        <taxon>Dikarya</taxon>
        <taxon>Ascomycota</taxon>
        <taxon>Saccharomycotina</taxon>
        <taxon>Pichiomycetes</taxon>
        <taxon>Debaryomycetaceae</taxon>
        <taxon>Debaryomyces</taxon>
    </lineage>
</organism>
<sequence length="476" mass="54591">MWTSLRHLKCSIPRQSINRCSSGLSKQFFKYKSTVSRNQDILKKITDTNTHAMNTADIPEGISESFVDHQFEPNKLVPTNDKKIIYNRLKPITPNDSYVSCTIFDIKGNITAVSRKYPKMKFLKGNDLFPRDLRKIDTSSIDVVPSIMVRSPNCILVNLLHIKAIIKKDSVMVFDTSTPSIATKLGLFMYDLEMKLKLPSGNICYEFRALESILISVMSYLEADLRNHLQGCGLILAELEDEIDRNKLQDLLIKSKKLSSFYQKAVLIRNVLEELLDNDEDLAGMYLTDPIKFDPTIENPTDFADLEMMLESYYKQCDEFVQQAGSLINDIKATEEIVNIILDTNRNSLMLFELKITVYTLGFTVATLLPAFYGMNLKNYIEESTFGFGAVAVFSIIQGLLIIMLSFRKLRKVQKLTMMDGAGNHLHHSSSPIGLMNKDKWYYRLFYGNRHTKYDRPTPKESDVIWRMINDDKPLK</sequence>
<accession>Q6BX67</accession>
<dbReference type="EMBL" id="CR382134">
    <property type="protein sequence ID" value="CAG85197.2"/>
    <property type="status" value="ALT_INIT"/>
    <property type="molecule type" value="Genomic_DNA"/>
</dbReference>
<dbReference type="RefSeq" id="XP_457202.2">
    <property type="nucleotide sequence ID" value="XM_457202.2"/>
</dbReference>
<dbReference type="SMR" id="Q6BX67"/>
<dbReference type="FunCoup" id="Q6BX67">
    <property type="interactions" value="374"/>
</dbReference>
<dbReference type="STRING" id="284592.Q6BX67"/>
<dbReference type="GeneID" id="2913155"/>
<dbReference type="KEGG" id="dha:DEHA2B05566g"/>
<dbReference type="eggNOG" id="KOG2662">
    <property type="taxonomic scope" value="Eukaryota"/>
</dbReference>
<dbReference type="HOGENOM" id="CLU_025144_1_0_1"/>
<dbReference type="InParanoid" id="Q6BX67"/>
<dbReference type="OrthoDB" id="10251508at2759"/>
<dbReference type="Proteomes" id="UP000000599">
    <property type="component" value="Chromosome B"/>
</dbReference>
<dbReference type="GO" id="GO:0005743">
    <property type="term" value="C:mitochondrial inner membrane"/>
    <property type="evidence" value="ECO:0000250"/>
    <property type="project" value="UniProtKB"/>
</dbReference>
<dbReference type="GO" id="GO:0015095">
    <property type="term" value="F:magnesium ion transmembrane transporter activity"/>
    <property type="evidence" value="ECO:0000250"/>
    <property type="project" value="UniProtKB"/>
</dbReference>
<dbReference type="GO" id="GO:0045016">
    <property type="term" value="P:mitochondrial magnesium ion transmembrane transport"/>
    <property type="evidence" value="ECO:0000250"/>
    <property type="project" value="UniProtKB"/>
</dbReference>
<dbReference type="CDD" id="cd12823">
    <property type="entry name" value="Mrs2_Mfm1p-like"/>
    <property type="match status" value="1"/>
</dbReference>
<dbReference type="FunFam" id="1.20.58.340:FF:000005">
    <property type="entry name" value="Inner membrane magnesium transporter MRS2"/>
    <property type="match status" value="1"/>
</dbReference>
<dbReference type="Gene3D" id="2.40.128.330">
    <property type="match status" value="1"/>
</dbReference>
<dbReference type="Gene3D" id="1.20.58.340">
    <property type="entry name" value="Magnesium transport protein CorA, transmembrane region"/>
    <property type="match status" value="1"/>
</dbReference>
<dbReference type="InterPro" id="IPR039204">
    <property type="entry name" value="MRS2-like"/>
</dbReference>
<dbReference type="PANTHER" id="PTHR13890:SF27">
    <property type="entry name" value="MAGNESIUM TRANSPORTER MRS2, MITOCHONDRIAL"/>
    <property type="match status" value="1"/>
</dbReference>
<dbReference type="PANTHER" id="PTHR13890">
    <property type="entry name" value="RNA SPLICING PROTEIN MRS2, MITOCHONDRIAL"/>
    <property type="match status" value="1"/>
</dbReference>
<dbReference type="Pfam" id="PF22099">
    <property type="entry name" value="MRS2-like"/>
    <property type="match status" value="1"/>
</dbReference>
<gene>
    <name type="primary">MRS2</name>
    <name type="ordered locus">DEHA2B05566g</name>
</gene>
<name>MRS2_DEBHA</name>
<comment type="function">
    <text evidence="1">High-conductance magnesium-selective channel that mediates the influx of magnesium into the mitochondrial matrix. Essential for the splicing of mRNA group II introns in mitochondria by affecting mitochondrial magnesium concentrations, which are critical for group II intron splicing. It also suppresses a variety of mitochondrial intron mutations and its absence may disturb the assembly of mitochondrial membrane complexes.</text>
</comment>
<comment type="subunit">
    <text evidence="1">Homopentamer. Forms homooligomers. Interacts with MFM1.</text>
</comment>
<comment type="subcellular location">
    <subcellularLocation>
        <location evidence="1">Mitochondrion inner membrane</location>
        <topology evidence="1">Multi-pass membrane protein</topology>
    </subcellularLocation>
</comment>
<comment type="similarity">
    <text evidence="3">Belongs to the CorA metal ion transporter (MIT) (TC 1.A.35) family.</text>
</comment>
<comment type="sequence caution" evidence="3">
    <conflict type="erroneous initiation">
        <sequence resource="EMBL-CDS" id="CAG85197"/>
    </conflict>
</comment>
<evidence type="ECO:0000250" key="1">
    <source>
        <dbReference type="UniProtKB" id="Q01926"/>
    </source>
</evidence>
<evidence type="ECO:0000255" key="2"/>
<evidence type="ECO:0000305" key="3"/>
<proteinExistence type="inferred from homology"/>